<gene>
    <name type="primary">setd6</name>
</gene>
<keyword id="KW-0489">Methyltransferase</keyword>
<keyword id="KW-0539">Nucleus</keyword>
<keyword id="KW-1185">Reference proteome</keyword>
<keyword id="KW-0949">S-adenosyl-L-methionine</keyword>
<keyword id="KW-0808">Transferase</keyword>
<feature type="chain" id="PRO_0000281893" description="N-lysine methyltransferase setd6">
    <location>
        <begin position="1"/>
        <end position="455"/>
    </location>
</feature>
<feature type="domain" description="SET" evidence="2">
    <location>
        <begin position="38"/>
        <end position="266"/>
    </location>
</feature>
<protein>
    <recommendedName>
        <fullName>N-lysine methyltransferase setd6</fullName>
        <ecNumber>2.1.1.-</ecNumber>
    </recommendedName>
    <alternativeName>
        <fullName>SET domain-containing protein 6</fullName>
    </alternativeName>
</protein>
<proteinExistence type="evidence at transcript level"/>
<evidence type="ECO:0000250" key="1">
    <source>
        <dbReference type="UniProtKB" id="Q8TBK2"/>
    </source>
</evidence>
<evidence type="ECO:0000255" key="2">
    <source>
        <dbReference type="PROSITE-ProRule" id="PRU00190"/>
    </source>
</evidence>
<organism>
    <name type="scientific">Xenopus laevis</name>
    <name type="common">African clawed frog</name>
    <dbReference type="NCBI Taxonomy" id="8355"/>
    <lineage>
        <taxon>Eukaryota</taxon>
        <taxon>Metazoa</taxon>
        <taxon>Chordata</taxon>
        <taxon>Craniata</taxon>
        <taxon>Vertebrata</taxon>
        <taxon>Euteleostomi</taxon>
        <taxon>Amphibia</taxon>
        <taxon>Batrachia</taxon>
        <taxon>Anura</taxon>
        <taxon>Pipoidea</taxon>
        <taxon>Pipidae</taxon>
        <taxon>Xenopodinae</taxon>
        <taxon>Xenopus</taxon>
        <taxon>Xenopus</taxon>
    </lineage>
</organism>
<dbReference type="EC" id="2.1.1.-"/>
<dbReference type="EMBL" id="BC072257">
    <property type="protein sequence ID" value="AAH72257.1"/>
    <property type="molecule type" value="mRNA"/>
</dbReference>
<dbReference type="RefSeq" id="NP_001085404.1">
    <property type="nucleotide sequence ID" value="NM_001091935.1"/>
</dbReference>
<dbReference type="SMR" id="Q6INM2"/>
<dbReference type="DNASU" id="443830"/>
<dbReference type="GeneID" id="443830"/>
<dbReference type="KEGG" id="xla:443830"/>
<dbReference type="AGR" id="Xenbase:XB-GENE-998238"/>
<dbReference type="CTD" id="443830"/>
<dbReference type="Xenbase" id="XB-GENE-998238">
    <property type="gene designation" value="setd6.L"/>
</dbReference>
<dbReference type="OrthoDB" id="341421at2759"/>
<dbReference type="Proteomes" id="UP000186698">
    <property type="component" value="Chromosome 4L"/>
</dbReference>
<dbReference type="Bgee" id="443830">
    <property type="expression patterns" value="Expressed in neurula embryo and 19 other cell types or tissues"/>
</dbReference>
<dbReference type="GO" id="GO:0005634">
    <property type="term" value="C:nucleus"/>
    <property type="evidence" value="ECO:0000250"/>
    <property type="project" value="UniProtKB"/>
</dbReference>
<dbReference type="GO" id="GO:0016279">
    <property type="term" value="F:protein-lysine N-methyltransferase activity"/>
    <property type="evidence" value="ECO:0000250"/>
    <property type="project" value="UniProtKB"/>
</dbReference>
<dbReference type="GO" id="GO:0032088">
    <property type="term" value="P:negative regulation of NF-kappaB transcription factor activity"/>
    <property type="evidence" value="ECO:0000250"/>
    <property type="project" value="UniProtKB"/>
</dbReference>
<dbReference type="GO" id="GO:0018026">
    <property type="term" value="P:peptidyl-lysine monomethylation"/>
    <property type="evidence" value="ECO:0000250"/>
    <property type="project" value="UniProtKB"/>
</dbReference>
<dbReference type="GO" id="GO:0050727">
    <property type="term" value="P:regulation of inflammatory response"/>
    <property type="evidence" value="ECO:0000250"/>
    <property type="project" value="UniProtKB"/>
</dbReference>
<dbReference type="CDD" id="cd19178">
    <property type="entry name" value="SET_SETD6"/>
    <property type="match status" value="1"/>
</dbReference>
<dbReference type="FunFam" id="3.90.1410.10:FF:000013">
    <property type="entry name" value="N-lysine methyltransferase SETD6"/>
    <property type="match status" value="1"/>
</dbReference>
<dbReference type="FunFam" id="3.90.1420.10:FF:000002">
    <property type="entry name" value="N-lysine methyltransferase SETD6"/>
    <property type="match status" value="1"/>
</dbReference>
<dbReference type="Gene3D" id="3.90.1420.10">
    <property type="entry name" value="Rubisco LSMT, substrate-binding domain"/>
    <property type="match status" value="1"/>
</dbReference>
<dbReference type="Gene3D" id="3.90.1410.10">
    <property type="entry name" value="set domain protein methyltransferase, domain 1"/>
    <property type="match status" value="1"/>
</dbReference>
<dbReference type="InterPro" id="IPR011383">
    <property type="entry name" value="N-lys_methylase_SETD6"/>
</dbReference>
<dbReference type="InterPro" id="IPR015353">
    <property type="entry name" value="Rubisco_LSMT_subst-bd"/>
</dbReference>
<dbReference type="InterPro" id="IPR036464">
    <property type="entry name" value="Rubisco_LSMT_subst-bd_sf"/>
</dbReference>
<dbReference type="InterPro" id="IPR001214">
    <property type="entry name" value="SET_dom"/>
</dbReference>
<dbReference type="InterPro" id="IPR046341">
    <property type="entry name" value="SET_dom_sf"/>
</dbReference>
<dbReference type="InterPro" id="IPR050600">
    <property type="entry name" value="SETD3_SETD6_MTase"/>
</dbReference>
<dbReference type="InterPro" id="IPR044430">
    <property type="entry name" value="SETD6_SET"/>
</dbReference>
<dbReference type="PANTHER" id="PTHR13271:SF34">
    <property type="entry name" value="N-LYSINE METHYLTRANSFERASE SETD6"/>
    <property type="match status" value="1"/>
</dbReference>
<dbReference type="PANTHER" id="PTHR13271">
    <property type="entry name" value="UNCHARACTERIZED PUTATIVE METHYLTRANSFERASE"/>
    <property type="match status" value="1"/>
</dbReference>
<dbReference type="Pfam" id="PF09273">
    <property type="entry name" value="Rubis-subs-bind"/>
    <property type="match status" value="1"/>
</dbReference>
<dbReference type="Pfam" id="PF00856">
    <property type="entry name" value="SET"/>
    <property type="match status" value="1"/>
</dbReference>
<dbReference type="PIRSF" id="PIRSF011771">
    <property type="entry name" value="RMS1_SET"/>
    <property type="match status" value="1"/>
</dbReference>
<dbReference type="SUPFAM" id="SSF81822">
    <property type="entry name" value="RuBisCo LSMT C-terminal, substrate-binding domain"/>
    <property type="match status" value="1"/>
</dbReference>
<dbReference type="SUPFAM" id="SSF82199">
    <property type="entry name" value="SET domain"/>
    <property type="match status" value="1"/>
</dbReference>
<dbReference type="PROSITE" id="PS50280">
    <property type="entry name" value="SET"/>
    <property type="match status" value="1"/>
</dbReference>
<reference key="1">
    <citation type="submission" date="2004-06" db="EMBL/GenBank/DDBJ databases">
        <authorList>
            <consortium name="NIH - Xenopus Gene Collection (XGC) project"/>
        </authorList>
    </citation>
    <scope>NUCLEOTIDE SEQUENCE [LARGE SCALE MRNA]</scope>
    <source>
        <tissue>Embryo</tissue>
    </source>
</reference>
<accession>Q6INM2</accession>
<sequence length="455" mass="52358">MGPDAKKQKLEGVDHLQNGFPVTRFLAWCEKVGLELNPKVYISTEGTVSQYGMLAREDIADGELLFTVPRSAILSQNTTRIQELLEKEQESLQSTSGWVPLLISLLYEATDSSSLWAPYFGLWPELDPPDMPMFWSEEEQTKLLQGTGVLEAIRNDLKNIEEEYNSIVLPFITRNPEKFCPMKHTLDLYKRLVAFVMAYSFQEPLEENDEEDEDEKDILPPMMVPVADLLNHVAHHNAHLEFTPECLRMVTTKSVHAGQELFNTYGEMANWQLLHMYGFAEPHPQNSNETADIQMVTMREAALQAAQTEDDRLEMQKRWDFLCHIEMVGEEGAFVFGLEEVMTEEELKVSLKVLCMSKEEFAEYKENDGWEEDEGDDEQTLMIQEISHLPTPWRKLLHLSAKLTLKNYSTELSMDEALVNNITAYAKLSSREQRSLQVKYGQKRILHQLLELTKS</sequence>
<comment type="function">
    <text evidence="1">Protein-lysine N-methyltransferase.</text>
</comment>
<comment type="subcellular location">
    <subcellularLocation>
        <location evidence="1">Nucleus</location>
    </subcellularLocation>
</comment>
<comment type="similarity">
    <text evidence="2">Belongs to the class V-like SAM-binding methyltransferase superfamily. Histone-lysine methyltransferase family. SETD6 subfamily.</text>
</comment>
<name>SETD6_XENLA</name>